<proteinExistence type="inferred from homology"/>
<keyword id="KW-0028">Amino-acid biosynthesis</keyword>
<keyword id="KW-0057">Aromatic amino acid biosynthesis</keyword>
<keyword id="KW-0274">FAD</keyword>
<keyword id="KW-0285">Flavoprotein</keyword>
<keyword id="KW-0288">FMN</keyword>
<keyword id="KW-0456">Lyase</keyword>
<keyword id="KW-0521">NADP</keyword>
<keyword id="KW-1185">Reference proteome</keyword>
<accession>Q7VY92</accession>
<protein>
    <recommendedName>
        <fullName evidence="1">Chorismate synthase</fullName>
        <shortName evidence="1">CS</shortName>
        <ecNumber evidence="1">4.2.3.5</ecNumber>
    </recommendedName>
    <alternativeName>
        <fullName evidence="1">5-enolpyruvylshikimate-3-phosphate phospholyase</fullName>
    </alternativeName>
</protein>
<name>AROC_BORPE</name>
<evidence type="ECO:0000255" key="1">
    <source>
        <dbReference type="HAMAP-Rule" id="MF_00300"/>
    </source>
</evidence>
<reference key="1">
    <citation type="journal article" date="2003" name="Nat. Genet.">
        <title>Comparative analysis of the genome sequences of Bordetella pertussis, Bordetella parapertussis and Bordetella bronchiseptica.</title>
        <authorList>
            <person name="Parkhill J."/>
            <person name="Sebaihia M."/>
            <person name="Preston A."/>
            <person name="Murphy L.D."/>
            <person name="Thomson N.R."/>
            <person name="Harris D.E."/>
            <person name="Holden M.T.G."/>
            <person name="Churcher C.M."/>
            <person name="Bentley S.D."/>
            <person name="Mungall K.L."/>
            <person name="Cerdeno-Tarraga A.-M."/>
            <person name="Temple L."/>
            <person name="James K.D."/>
            <person name="Harris B."/>
            <person name="Quail M.A."/>
            <person name="Achtman M."/>
            <person name="Atkin R."/>
            <person name="Baker S."/>
            <person name="Basham D."/>
            <person name="Bason N."/>
            <person name="Cherevach I."/>
            <person name="Chillingworth T."/>
            <person name="Collins M."/>
            <person name="Cronin A."/>
            <person name="Davis P."/>
            <person name="Doggett J."/>
            <person name="Feltwell T."/>
            <person name="Goble A."/>
            <person name="Hamlin N."/>
            <person name="Hauser H."/>
            <person name="Holroyd S."/>
            <person name="Jagels K."/>
            <person name="Leather S."/>
            <person name="Moule S."/>
            <person name="Norberczak H."/>
            <person name="O'Neil S."/>
            <person name="Ormond D."/>
            <person name="Price C."/>
            <person name="Rabbinowitsch E."/>
            <person name="Rutter S."/>
            <person name="Sanders M."/>
            <person name="Saunders D."/>
            <person name="Seeger K."/>
            <person name="Sharp S."/>
            <person name="Simmonds M."/>
            <person name="Skelton J."/>
            <person name="Squares R."/>
            <person name="Squares S."/>
            <person name="Stevens K."/>
            <person name="Unwin L."/>
            <person name="Whitehead S."/>
            <person name="Barrell B.G."/>
            <person name="Maskell D.J."/>
        </authorList>
    </citation>
    <scope>NUCLEOTIDE SEQUENCE [LARGE SCALE GENOMIC DNA]</scope>
    <source>
        <strain>Tohama I / ATCC BAA-589 / NCTC 13251</strain>
    </source>
</reference>
<comment type="function">
    <text evidence="1">Catalyzes the anti-1,4-elimination of the C-3 phosphate and the C-6 proR hydrogen from 5-enolpyruvylshikimate-3-phosphate (EPSP) to yield chorismate, which is the branch point compound that serves as the starting substrate for the three terminal pathways of aromatic amino acid biosynthesis. This reaction introduces a second double bond into the aromatic ring system.</text>
</comment>
<comment type="catalytic activity">
    <reaction evidence="1">
        <text>5-O-(1-carboxyvinyl)-3-phosphoshikimate = chorismate + phosphate</text>
        <dbReference type="Rhea" id="RHEA:21020"/>
        <dbReference type="ChEBI" id="CHEBI:29748"/>
        <dbReference type="ChEBI" id="CHEBI:43474"/>
        <dbReference type="ChEBI" id="CHEBI:57701"/>
        <dbReference type="EC" id="4.2.3.5"/>
    </reaction>
</comment>
<comment type="cofactor">
    <cofactor evidence="1">
        <name>FMNH2</name>
        <dbReference type="ChEBI" id="CHEBI:57618"/>
    </cofactor>
    <text evidence="1">Reduced FMN (FMNH(2)).</text>
</comment>
<comment type="pathway">
    <text evidence="1">Metabolic intermediate biosynthesis; chorismate biosynthesis; chorismate from D-erythrose 4-phosphate and phosphoenolpyruvate: step 7/7.</text>
</comment>
<comment type="subunit">
    <text evidence="1">Homotetramer.</text>
</comment>
<comment type="similarity">
    <text evidence="1">Belongs to the chorismate synthase family.</text>
</comment>
<feature type="chain" id="PRO_0000140559" description="Chorismate synthase">
    <location>
        <begin position="1"/>
        <end position="353"/>
    </location>
</feature>
<feature type="binding site" evidence="1">
    <location>
        <position position="48"/>
    </location>
    <ligand>
        <name>NADP(+)</name>
        <dbReference type="ChEBI" id="CHEBI:58349"/>
    </ligand>
</feature>
<feature type="binding site" evidence="1">
    <location>
        <position position="54"/>
    </location>
    <ligand>
        <name>NADP(+)</name>
        <dbReference type="ChEBI" id="CHEBI:58349"/>
    </ligand>
</feature>
<feature type="binding site" evidence="1">
    <location>
        <begin position="125"/>
        <end position="127"/>
    </location>
    <ligand>
        <name>FMN</name>
        <dbReference type="ChEBI" id="CHEBI:58210"/>
    </ligand>
</feature>
<feature type="binding site" evidence="1">
    <location>
        <begin position="238"/>
        <end position="239"/>
    </location>
    <ligand>
        <name>FMN</name>
        <dbReference type="ChEBI" id="CHEBI:58210"/>
    </ligand>
</feature>
<feature type="binding site" evidence="1">
    <location>
        <position position="278"/>
    </location>
    <ligand>
        <name>FMN</name>
        <dbReference type="ChEBI" id="CHEBI:58210"/>
    </ligand>
</feature>
<feature type="binding site" evidence="1">
    <location>
        <begin position="293"/>
        <end position="297"/>
    </location>
    <ligand>
        <name>FMN</name>
        <dbReference type="ChEBI" id="CHEBI:58210"/>
    </ligand>
</feature>
<feature type="binding site" evidence="1">
    <location>
        <position position="319"/>
    </location>
    <ligand>
        <name>FMN</name>
        <dbReference type="ChEBI" id="CHEBI:58210"/>
    </ligand>
</feature>
<organism>
    <name type="scientific">Bordetella pertussis (strain Tohama I / ATCC BAA-589 / NCTC 13251)</name>
    <dbReference type="NCBI Taxonomy" id="257313"/>
    <lineage>
        <taxon>Bacteria</taxon>
        <taxon>Pseudomonadati</taxon>
        <taxon>Pseudomonadota</taxon>
        <taxon>Betaproteobacteria</taxon>
        <taxon>Burkholderiales</taxon>
        <taxon>Alcaligenaceae</taxon>
        <taxon>Bordetella</taxon>
    </lineage>
</organism>
<gene>
    <name evidence="1" type="primary">aroC</name>
    <name type="ordered locus">BP1462</name>
</gene>
<dbReference type="EC" id="4.2.3.5" evidence="1"/>
<dbReference type="EMBL" id="BX640415">
    <property type="protein sequence ID" value="CAE41751.1"/>
    <property type="molecule type" value="Genomic_DNA"/>
</dbReference>
<dbReference type="RefSeq" id="NP_880201.1">
    <property type="nucleotide sequence ID" value="NC_002929.2"/>
</dbReference>
<dbReference type="RefSeq" id="WP_003820487.1">
    <property type="nucleotide sequence ID" value="NZ_CP039022.1"/>
</dbReference>
<dbReference type="SMR" id="Q7VY92"/>
<dbReference type="STRING" id="257313.BP1462"/>
<dbReference type="PaxDb" id="257313-BP1462"/>
<dbReference type="GeneID" id="69601375"/>
<dbReference type="KEGG" id="bpe:BP1462"/>
<dbReference type="PATRIC" id="fig|257313.5.peg.1568"/>
<dbReference type="eggNOG" id="COG0082">
    <property type="taxonomic scope" value="Bacteria"/>
</dbReference>
<dbReference type="HOGENOM" id="CLU_034547_0_2_4"/>
<dbReference type="UniPathway" id="UPA00053">
    <property type="reaction ID" value="UER00090"/>
</dbReference>
<dbReference type="Proteomes" id="UP000002676">
    <property type="component" value="Chromosome"/>
</dbReference>
<dbReference type="GO" id="GO:0005829">
    <property type="term" value="C:cytosol"/>
    <property type="evidence" value="ECO:0007669"/>
    <property type="project" value="TreeGrafter"/>
</dbReference>
<dbReference type="GO" id="GO:0004107">
    <property type="term" value="F:chorismate synthase activity"/>
    <property type="evidence" value="ECO:0007669"/>
    <property type="project" value="UniProtKB-UniRule"/>
</dbReference>
<dbReference type="GO" id="GO:0010181">
    <property type="term" value="F:FMN binding"/>
    <property type="evidence" value="ECO:0007669"/>
    <property type="project" value="TreeGrafter"/>
</dbReference>
<dbReference type="GO" id="GO:0008652">
    <property type="term" value="P:amino acid biosynthetic process"/>
    <property type="evidence" value="ECO:0007669"/>
    <property type="project" value="UniProtKB-KW"/>
</dbReference>
<dbReference type="GO" id="GO:0009073">
    <property type="term" value="P:aromatic amino acid family biosynthetic process"/>
    <property type="evidence" value="ECO:0007669"/>
    <property type="project" value="UniProtKB-KW"/>
</dbReference>
<dbReference type="GO" id="GO:0009423">
    <property type="term" value="P:chorismate biosynthetic process"/>
    <property type="evidence" value="ECO:0007669"/>
    <property type="project" value="UniProtKB-UniRule"/>
</dbReference>
<dbReference type="CDD" id="cd07304">
    <property type="entry name" value="Chorismate_synthase"/>
    <property type="match status" value="1"/>
</dbReference>
<dbReference type="FunFam" id="3.60.150.10:FF:000001">
    <property type="entry name" value="Chorismate synthase"/>
    <property type="match status" value="1"/>
</dbReference>
<dbReference type="Gene3D" id="3.60.150.10">
    <property type="entry name" value="Chorismate synthase AroC"/>
    <property type="match status" value="1"/>
</dbReference>
<dbReference type="HAMAP" id="MF_00300">
    <property type="entry name" value="Chorismate_synth"/>
    <property type="match status" value="1"/>
</dbReference>
<dbReference type="InterPro" id="IPR000453">
    <property type="entry name" value="Chorismate_synth"/>
</dbReference>
<dbReference type="InterPro" id="IPR035904">
    <property type="entry name" value="Chorismate_synth_AroC_sf"/>
</dbReference>
<dbReference type="InterPro" id="IPR020541">
    <property type="entry name" value="Chorismate_synthase_CS"/>
</dbReference>
<dbReference type="NCBIfam" id="TIGR00033">
    <property type="entry name" value="aroC"/>
    <property type="match status" value="1"/>
</dbReference>
<dbReference type="NCBIfam" id="NF003793">
    <property type="entry name" value="PRK05382.1"/>
    <property type="match status" value="1"/>
</dbReference>
<dbReference type="PANTHER" id="PTHR21085">
    <property type="entry name" value="CHORISMATE SYNTHASE"/>
    <property type="match status" value="1"/>
</dbReference>
<dbReference type="PANTHER" id="PTHR21085:SF0">
    <property type="entry name" value="CHORISMATE SYNTHASE"/>
    <property type="match status" value="1"/>
</dbReference>
<dbReference type="Pfam" id="PF01264">
    <property type="entry name" value="Chorismate_synt"/>
    <property type="match status" value="1"/>
</dbReference>
<dbReference type="PIRSF" id="PIRSF001456">
    <property type="entry name" value="Chorismate_synth"/>
    <property type="match status" value="1"/>
</dbReference>
<dbReference type="SUPFAM" id="SSF103263">
    <property type="entry name" value="Chorismate synthase, AroC"/>
    <property type="match status" value="1"/>
</dbReference>
<dbReference type="PROSITE" id="PS00787">
    <property type="entry name" value="CHORISMATE_SYNTHASE_1"/>
    <property type="match status" value="1"/>
</dbReference>
<dbReference type="PROSITE" id="PS00788">
    <property type="entry name" value="CHORISMATE_SYNTHASE_2"/>
    <property type="match status" value="1"/>
</dbReference>
<dbReference type="PROSITE" id="PS00789">
    <property type="entry name" value="CHORISMATE_SYNTHASE_3"/>
    <property type="match status" value="1"/>
</dbReference>
<sequence length="353" mass="37304">MSGNTLGTLFCVTNFGESHGPAIGCVVDGCPPGLPLEAADIQAELDRRRPGTSRHVTQRQEADQVEILSGVYEGVTTGTPIGLLIRNTDARSKDYSNIADTFRPGHADFAYWRKYGVRDPRGGGRSSARLTAPTVAAGAIAKKWLASQFGVRVRGYMSQLGPIAIPFSSWDDVPGNAFYAPNAAVVPELEAYMDQLRRDGDSVGARIEVVAEGLPAGWGEPIYDRLDADIAHAMMGLNAVKGVSLGAGFESIAQRGSEHGDEITPEGFASNHAGGVLGGISTGQPITVSLAIKPTSSIRVERRSVNRAGEPVMVQTLGRHDPCVGIRATPIAEALLALVLIDHALRQRAQCGG</sequence>